<accession>C4YTL7</accession>
<dbReference type="EMBL" id="CM000313">
    <property type="protein sequence ID" value="EEQ46958.1"/>
    <property type="molecule type" value="Genomic_DNA"/>
</dbReference>
<dbReference type="PaxDb" id="5476-C4YTL7"/>
<dbReference type="VEuPathDB" id="FungiDB:CAWG_05512"/>
<dbReference type="HOGENOM" id="CLU_153999_0_0_1"/>
<dbReference type="OMA" id="WKMTPAM"/>
<dbReference type="OrthoDB" id="209at766764"/>
<dbReference type="Proteomes" id="UP000001429">
    <property type="component" value="Chromosome 7"/>
</dbReference>
<dbReference type="GO" id="GO:0005743">
    <property type="term" value="C:mitochondrial inner membrane"/>
    <property type="evidence" value="ECO:0007669"/>
    <property type="project" value="UniProtKB-SubCell"/>
</dbReference>
<dbReference type="GO" id="GO:0033617">
    <property type="term" value="P:mitochondrial cytochrome c oxidase assembly"/>
    <property type="evidence" value="ECO:0007669"/>
    <property type="project" value="InterPro"/>
</dbReference>
<dbReference type="InterPro" id="IPR041752">
    <property type="entry name" value="Coa3"/>
</dbReference>
<dbReference type="PANTHER" id="PTHR15642:SF3">
    <property type="entry name" value="CYTOCHROME C OXIDASE ASSEMBLY FACTOR 3 HOMOLOG, MITOCHONDRIAL"/>
    <property type="match status" value="1"/>
</dbReference>
<dbReference type="PANTHER" id="PTHR15642">
    <property type="entry name" value="CYTOCHROME C OXIDASE ASSEMBLY FACTOR 3, MITOCHONDRIAL"/>
    <property type="match status" value="1"/>
</dbReference>
<keyword id="KW-0472">Membrane</keyword>
<keyword id="KW-0496">Mitochondrion</keyword>
<keyword id="KW-0999">Mitochondrion inner membrane</keyword>
<keyword id="KW-0812">Transmembrane</keyword>
<keyword id="KW-1133">Transmembrane helix</keyword>
<feature type="chain" id="PRO_0000405437" description="Cytochrome c oxidase assembly factor 3, mitochondrial">
    <location>
        <begin position="1"/>
        <end position="88"/>
    </location>
</feature>
<feature type="topological domain" description="Mitochondrial matrix" evidence="1">
    <location>
        <begin position="1"/>
        <end position="32"/>
    </location>
</feature>
<feature type="transmembrane region" description="Helical" evidence="2">
    <location>
        <begin position="33"/>
        <end position="55"/>
    </location>
</feature>
<feature type="topological domain" description="Mitochondrial intermembrane" evidence="1">
    <location>
        <begin position="56"/>
        <end position="88"/>
    </location>
</feature>
<gene>
    <name type="primary">COA3</name>
    <name type="ORF">CAWG_05512</name>
</gene>
<proteinExistence type="inferred from homology"/>
<sequence>MGKLVGAPKGHDRYRDPKTHQITPALYRVRAPFFWRNTIALFAVSSIPLAVYLYTFKKMGDDDLGDIPIPPISDEELQKLKLEYENQK</sequence>
<evidence type="ECO:0000250" key="1"/>
<evidence type="ECO:0000255" key="2"/>
<evidence type="ECO:0000305" key="3"/>
<name>COA3_CANAW</name>
<comment type="function">
    <text evidence="1">Required for assembly of cytochrome c oxidase (complex IV).</text>
</comment>
<comment type="subunit">
    <text evidence="1">Component of 250-400 kDa complexes called cytochrome oxidase assembly intermediates or COA complexes.</text>
</comment>
<comment type="subcellular location">
    <subcellularLocation>
        <location>Mitochondrion inner membrane</location>
        <topology>Single-pass membrane protein</topology>
    </subcellularLocation>
</comment>
<comment type="similarity">
    <text evidence="3">Belongs to the COA3 family.</text>
</comment>
<reference key="1">
    <citation type="journal article" date="2009" name="Nature">
        <title>Evolution of pathogenicity and sexual reproduction in eight Candida genomes.</title>
        <authorList>
            <person name="Butler G."/>
            <person name="Rasmussen M.D."/>
            <person name="Lin M.F."/>
            <person name="Santos M.A.S."/>
            <person name="Sakthikumar S."/>
            <person name="Munro C.A."/>
            <person name="Rheinbay E."/>
            <person name="Grabherr M."/>
            <person name="Forche A."/>
            <person name="Reedy J.L."/>
            <person name="Agrafioti I."/>
            <person name="Arnaud M.B."/>
            <person name="Bates S."/>
            <person name="Brown A.J.P."/>
            <person name="Brunke S."/>
            <person name="Costanzo M.C."/>
            <person name="Fitzpatrick D.A."/>
            <person name="de Groot P.W.J."/>
            <person name="Harris D."/>
            <person name="Hoyer L.L."/>
            <person name="Hube B."/>
            <person name="Klis F.M."/>
            <person name="Kodira C."/>
            <person name="Lennard N."/>
            <person name="Logue M.E."/>
            <person name="Martin R."/>
            <person name="Neiman A.M."/>
            <person name="Nikolaou E."/>
            <person name="Quail M.A."/>
            <person name="Quinn J."/>
            <person name="Santos M.C."/>
            <person name="Schmitzberger F.F."/>
            <person name="Sherlock G."/>
            <person name="Shah P."/>
            <person name="Silverstein K.A.T."/>
            <person name="Skrzypek M.S."/>
            <person name="Soll D."/>
            <person name="Staggs R."/>
            <person name="Stansfield I."/>
            <person name="Stumpf M.P.H."/>
            <person name="Sudbery P.E."/>
            <person name="Srikantha T."/>
            <person name="Zeng Q."/>
            <person name="Berman J."/>
            <person name="Berriman M."/>
            <person name="Heitman J."/>
            <person name="Gow N.A.R."/>
            <person name="Lorenz M.C."/>
            <person name="Birren B.W."/>
            <person name="Kellis M."/>
            <person name="Cuomo C.A."/>
        </authorList>
    </citation>
    <scope>NUCLEOTIDE SEQUENCE [LARGE SCALE GENOMIC DNA]</scope>
    <source>
        <strain>WO-1</strain>
    </source>
</reference>
<protein>
    <recommendedName>
        <fullName>Cytochrome c oxidase assembly factor 3, mitochondrial</fullName>
    </recommendedName>
</protein>
<organism>
    <name type="scientific">Candida albicans (strain WO-1)</name>
    <name type="common">Yeast</name>
    <dbReference type="NCBI Taxonomy" id="294748"/>
    <lineage>
        <taxon>Eukaryota</taxon>
        <taxon>Fungi</taxon>
        <taxon>Dikarya</taxon>
        <taxon>Ascomycota</taxon>
        <taxon>Saccharomycotina</taxon>
        <taxon>Pichiomycetes</taxon>
        <taxon>Debaryomycetaceae</taxon>
        <taxon>Candida/Lodderomyces clade</taxon>
        <taxon>Candida</taxon>
    </lineage>
</organism>